<evidence type="ECO:0000255" key="1">
    <source>
        <dbReference type="HAMAP-Rule" id="MF_01325"/>
    </source>
</evidence>
<evidence type="ECO:0000305" key="2"/>
<reference key="1">
    <citation type="submission" date="2009-01" db="EMBL/GenBank/DDBJ databases">
        <title>Complete sequence of chromosome of Caldicellulosiruptor becscii DSM 6725.</title>
        <authorList>
            <person name="Lucas S."/>
            <person name="Copeland A."/>
            <person name="Lapidus A."/>
            <person name="Glavina del Rio T."/>
            <person name="Tice H."/>
            <person name="Bruce D."/>
            <person name="Goodwin L."/>
            <person name="Pitluck S."/>
            <person name="Sims D."/>
            <person name="Meincke L."/>
            <person name="Brettin T."/>
            <person name="Detter J.C."/>
            <person name="Han C."/>
            <person name="Larimer F."/>
            <person name="Land M."/>
            <person name="Hauser L."/>
            <person name="Kyrpides N."/>
            <person name="Ovchinnikova G."/>
            <person name="Kataeva I."/>
            <person name="Adams M.W.W."/>
        </authorList>
    </citation>
    <scope>NUCLEOTIDE SEQUENCE [LARGE SCALE GENOMIC DNA]</scope>
    <source>
        <strain>ATCC BAA-1888 / DSM 6725 / KCTC 15123 / Z-1320</strain>
    </source>
</reference>
<name>RL3_CALBD</name>
<gene>
    <name evidence="1" type="primary">rplC</name>
    <name type="ordered locus">Athe_1745</name>
</gene>
<dbReference type="EMBL" id="CP001393">
    <property type="protein sequence ID" value="ACM60839.1"/>
    <property type="molecule type" value="Genomic_DNA"/>
</dbReference>
<dbReference type="RefSeq" id="WP_015908146.1">
    <property type="nucleotide sequence ID" value="NC_012034.1"/>
</dbReference>
<dbReference type="SMR" id="B9MKI1"/>
<dbReference type="STRING" id="521460.Athe_1745"/>
<dbReference type="GeneID" id="31773102"/>
<dbReference type="KEGG" id="ate:Athe_1745"/>
<dbReference type="eggNOG" id="COG0087">
    <property type="taxonomic scope" value="Bacteria"/>
</dbReference>
<dbReference type="HOGENOM" id="CLU_044142_4_1_9"/>
<dbReference type="Proteomes" id="UP000007723">
    <property type="component" value="Chromosome"/>
</dbReference>
<dbReference type="GO" id="GO:0022625">
    <property type="term" value="C:cytosolic large ribosomal subunit"/>
    <property type="evidence" value="ECO:0007669"/>
    <property type="project" value="TreeGrafter"/>
</dbReference>
<dbReference type="GO" id="GO:0019843">
    <property type="term" value="F:rRNA binding"/>
    <property type="evidence" value="ECO:0007669"/>
    <property type="project" value="UniProtKB-UniRule"/>
</dbReference>
<dbReference type="GO" id="GO:0003735">
    <property type="term" value="F:structural constituent of ribosome"/>
    <property type="evidence" value="ECO:0007669"/>
    <property type="project" value="InterPro"/>
</dbReference>
<dbReference type="GO" id="GO:0006412">
    <property type="term" value="P:translation"/>
    <property type="evidence" value="ECO:0007669"/>
    <property type="project" value="UniProtKB-UniRule"/>
</dbReference>
<dbReference type="FunFam" id="2.40.30.10:FF:000004">
    <property type="entry name" value="50S ribosomal protein L3"/>
    <property type="match status" value="1"/>
</dbReference>
<dbReference type="FunFam" id="3.30.160.810:FF:000001">
    <property type="entry name" value="50S ribosomal protein L3"/>
    <property type="match status" value="1"/>
</dbReference>
<dbReference type="Gene3D" id="3.30.160.810">
    <property type="match status" value="1"/>
</dbReference>
<dbReference type="Gene3D" id="2.40.30.10">
    <property type="entry name" value="Translation factors"/>
    <property type="match status" value="1"/>
</dbReference>
<dbReference type="HAMAP" id="MF_01325_B">
    <property type="entry name" value="Ribosomal_uL3_B"/>
    <property type="match status" value="1"/>
</dbReference>
<dbReference type="InterPro" id="IPR000597">
    <property type="entry name" value="Ribosomal_uL3"/>
</dbReference>
<dbReference type="InterPro" id="IPR019927">
    <property type="entry name" value="Ribosomal_uL3_bac/org-type"/>
</dbReference>
<dbReference type="InterPro" id="IPR009000">
    <property type="entry name" value="Transl_B-barrel_sf"/>
</dbReference>
<dbReference type="NCBIfam" id="TIGR03625">
    <property type="entry name" value="L3_bact"/>
    <property type="match status" value="1"/>
</dbReference>
<dbReference type="PANTHER" id="PTHR11229">
    <property type="entry name" value="50S RIBOSOMAL PROTEIN L3"/>
    <property type="match status" value="1"/>
</dbReference>
<dbReference type="PANTHER" id="PTHR11229:SF16">
    <property type="entry name" value="LARGE RIBOSOMAL SUBUNIT PROTEIN UL3C"/>
    <property type="match status" value="1"/>
</dbReference>
<dbReference type="Pfam" id="PF00297">
    <property type="entry name" value="Ribosomal_L3"/>
    <property type="match status" value="1"/>
</dbReference>
<dbReference type="SUPFAM" id="SSF50447">
    <property type="entry name" value="Translation proteins"/>
    <property type="match status" value="1"/>
</dbReference>
<protein>
    <recommendedName>
        <fullName evidence="1">Large ribosomal subunit protein uL3</fullName>
    </recommendedName>
    <alternativeName>
        <fullName evidence="2">50S ribosomal protein L3</fullName>
    </alternativeName>
</protein>
<sequence>MTKGILGKKIGMTQIFDEAGRAIPVTVIEAGPCVVVQKKTVEKDGYSAIQVGFEDIKESKLNKPLRGHFAKHGVKPKRFLRELRLKDADKYEVGQEIRVDIFQPGEKVDVTGISKAKGFQGVIKRHGQQRGPMSHGSMYHRRVGSMGSNTFPARTFPGKKMPGRMGGERVTVLNLQVVKVDPDRNLLLVKGSVPGNKNSLLIIRDSVKSK</sequence>
<organism>
    <name type="scientific">Caldicellulosiruptor bescii (strain ATCC BAA-1888 / DSM 6725 / KCTC 15123 / Z-1320)</name>
    <name type="common">Anaerocellum thermophilum</name>
    <dbReference type="NCBI Taxonomy" id="521460"/>
    <lineage>
        <taxon>Bacteria</taxon>
        <taxon>Bacillati</taxon>
        <taxon>Bacillota</taxon>
        <taxon>Bacillota incertae sedis</taxon>
        <taxon>Caldicellulosiruptorales</taxon>
        <taxon>Caldicellulosiruptoraceae</taxon>
        <taxon>Caldicellulosiruptor</taxon>
    </lineage>
</organism>
<accession>B9MKI1</accession>
<comment type="function">
    <text evidence="1">One of the primary rRNA binding proteins, it binds directly near the 3'-end of the 23S rRNA, where it nucleates assembly of the 50S subunit.</text>
</comment>
<comment type="subunit">
    <text evidence="1">Part of the 50S ribosomal subunit. Forms a cluster with proteins L14 and L19.</text>
</comment>
<comment type="similarity">
    <text evidence="1">Belongs to the universal ribosomal protein uL3 family.</text>
</comment>
<keyword id="KW-0687">Ribonucleoprotein</keyword>
<keyword id="KW-0689">Ribosomal protein</keyword>
<keyword id="KW-0694">RNA-binding</keyword>
<keyword id="KW-0699">rRNA-binding</keyword>
<proteinExistence type="inferred from homology"/>
<feature type="chain" id="PRO_1000165862" description="Large ribosomal subunit protein uL3">
    <location>
        <begin position="1"/>
        <end position="210"/>
    </location>
</feature>